<name>NRDR_CORGL</name>
<proteinExistence type="inferred from homology"/>
<keyword id="KW-0067">ATP-binding</keyword>
<keyword id="KW-0238">DNA-binding</keyword>
<keyword id="KW-0479">Metal-binding</keyword>
<keyword id="KW-0547">Nucleotide-binding</keyword>
<keyword id="KW-1185">Reference proteome</keyword>
<keyword id="KW-0678">Repressor</keyword>
<keyword id="KW-0804">Transcription</keyword>
<keyword id="KW-0805">Transcription regulation</keyword>
<keyword id="KW-0862">Zinc</keyword>
<keyword id="KW-0863">Zinc-finger</keyword>
<protein>
    <recommendedName>
        <fullName evidence="1">Transcriptional repressor NrdR</fullName>
    </recommendedName>
</protein>
<accession>Q8NP88</accession>
<dbReference type="EMBL" id="BA000036">
    <property type="protein sequence ID" value="BAB99321.1"/>
    <property type="molecule type" value="Genomic_DNA"/>
</dbReference>
<dbReference type="EMBL" id="BX927153">
    <property type="protein sequence ID" value="CAF20269.1"/>
    <property type="molecule type" value="Genomic_DNA"/>
</dbReference>
<dbReference type="RefSeq" id="NP_601134.1">
    <property type="nucleotide sequence ID" value="NC_003450.3"/>
</dbReference>
<dbReference type="RefSeq" id="WP_003857385.1">
    <property type="nucleotide sequence ID" value="NC_006958.1"/>
</dbReference>
<dbReference type="SMR" id="Q8NP88"/>
<dbReference type="STRING" id="196627.cg2112"/>
<dbReference type="GeneID" id="1019885"/>
<dbReference type="KEGG" id="cgb:cg2112"/>
<dbReference type="KEGG" id="cgl:Cgl1928"/>
<dbReference type="PATRIC" id="fig|196627.13.peg.1866"/>
<dbReference type="eggNOG" id="COG1327">
    <property type="taxonomic scope" value="Bacteria"/>
</dbReference>
<dbReference type="HOGENOM" id="CLU_108412_1_0_11"/>
<dbReference type="OrthoDB" id="9807461at2"/>
<dbReference type="BioCyc" id="CORYNE:G18NG-11520-MONOMER"/>
<dbReference type="Proteomes" id="UP000000582">
    <property type="component" value="Chromosome"/>
</dbReference>
<dbReference type="Proteomes" id="UP000001009">
    <property type="component" value="Chromosome"/>
</dbReference>
<dbReference type="GO" id="GO:0005524">
    <property type="term" value="F:ATP binding"/>
    <property type="evidence" value="ECO:0007669"/>
    <property type="project" value="UniProtKB-KW"/>
</dbReference>
<dbReference type="GO" id="GO:0003677">
    <property type="term" value="F:DNA binding"/>
    <property type="evidence" value="ECO:0007669"/>
    <property type="project" value="UniProtKB-KW"/>
</dbReference>
<dbReference type="GO" id="GO:0008270">
    <property type="term" value="F:zinc ion binding"/>
    <property type="evidence" value="ECO:0007669"/>
    <property type="project" value="UniProtKB-UniRule"/>
</dbReference>
<dbReference type="GO" id="GO:0045892">
    <property type="term" value="P:negative regulation of DNA-templated transcription"/>
    <property type="evidence" value="ECO:0007669"/>
    <property type="project" value="UniProtKB-UniRule"/>
</dbReference>
<dbReference type="HAMAP" id="MF_00440">
    <property type="entry name" value="NrdR"/>
    <property type="match status" value="1"/>
</dbReference>
<dbReference type="InterPro" id="IPR005144">
    <property type="entry name" value="ATP-cone_dom"/>
</dbReference>
<dbReference type="InterPro" id="IPR055173">
    <property type="entry name" value="NrdR-like_N"/>
</dbReference>
<dbReference type="InterPro" id="IPR003796">
    <property type="entry name" value="RNR_NrdR-like"/>
</dbReference>
<dbReference type="NCBIfam" id="TIGR00244">
    <property type="entry name" value="transcriptional regulator NrdR"/>
    <property type="match status" value="1"/>
</dbReference>
<dbReference type="PANTHER" id="PTHR30455">
    <property type="entry name" value="TRANSCRIPTIONAL REPRESSOR NRDR"/>
    <property type="match status" value="1"/>
</dbReference>
<dbReference type="PANTHER" id="PTHR30455:SF2">
    <property type="entry name" value="TRANSCRIPTIONAL REPRESSOR NRDR"/>
    <property type="match status" value="1"/>
</dbReference>
<dbReference type="Pfam" id="PF03477">
    <property type="entry name" value="ATP-cone"/>
    <property type="match status" value="1"/>
</dbReference>
<dbReference type="Pfam" id="PF22811">
    <property type="entry name" value="Zn_ribbon_NrdR"/>
    <property type="match status" value="1"/>
</dbReference>
<dbReference type="PROSITE" id="PS51161">
    <property type="entry name" value="ATP_CONE"/>
    <property type="match status" value="1"/>
</dbReference>
<reference key="1">
    <citation type="journal article" date="2003" name="Appl. Microbiol. Biotechnol.">
        <title>The Corynebacterium glutamicum genome: features and impacts on biotechnological processes.</title>
        <authorList>
            <person name="Ikeda M."/>
            <person name="Nakagawa S."/>
        </authorList>
    </citation>
    <scope>NUCLEOTIDE SEQUENCE [LARGE SCALE GENOMIC DNA]</scope>
    <source>
        <strain>ATCC 13032 / DSM 20300 / JCM 1318 / BCRC 11384 / CCUG 27702 / LMG 3730 / NBRC 12168 / NCIMB 10025 / NRRL B-2784 / 534</strain>
    </source>
</reference>
<reference key="2">
    <citation type="journal article" date="2003" name="J. Biotechnol.">
        <title>The complete Corynebacterium glutamicum ATCC 13032 genome sequence and its impact on the production of L-aspartate-derived amino acids and vitamins.</title>
        <authorList>
            <person name="Kalinowski J."/>
            <person name="Bathe B."/>
            <person name="Bartels D."/>
            <person name="Bischoff N."/>
            <person name="Bott M."/>
            <person name="Burkovski A."/>
            <person name="Dusch N."/>
            <person name="Eggeling L."/>
            <person name="Eikmanns B.J."/>
            <person name="Gaigalat L."/>
            <person name="Goesmann A."/>
            <person name="Hartmann M."/>
            <person name="Huthmacher K."/>
            <person name="Kraemer R."/>
            <person name="Linke B."/>
            <person name="McHardy A.C."/>
            <person name="Meyer F."/>
            <person name="Moeckel B."/>
            <person name="Pfefferle W."/>
            <person name="Puehler A."/>
            <person name="Rey D.A."/>
            <person name="Rueckert C."/>
            <person name="Rupp O."/>
            <person name="Sahm H."/>
            <person name="Wendisch V.F."/>
            <person name="Wiegraebe I."/>
            <person name="Tauch A."/>
        </authorList>
    </citation>
    <scope>NUCLEOTIDE SEQUENCE [LARGE SCALE GENOMIC DNA]</scope>
    <source>
        <strain>ATCC 13032 / DSM 20300 / JCM 1318 / BCRC 11384 / CCUG 27702 / LMG 3730 / NBRC 12168 / NCIMB 10025 / NRRL B-2784 / 534</strain>
    </source>
</reference>
<feature type="chain" id="PRO_0000182290" description="Transcriptional repressor NrdR">
    <location>
        <begin position="1"/>
        <end position="150"/>
    </location>
</feature>
<feature type="domain" description="ATP-cone" evidence="1">
    <location>
        <begin position="46"/>
        <end position="136"/>
    </location>
</feature>
<feature type="zinc finger region" evidence="1">
    <location>
        <begin position="3"/>
        <end position="34"/>
    </location>
</feature>
<evidence type="ECO:0000255" key="1">
    <source>
        <dbReference type="HAMAP-Rule" id="MF_00440"/>
    </source>
</evidence>
<comment type="function">
    <text evidence="1">Negatively regulates transcription of bacterial ribonucleotide reductase nrd genes and operons by binding to NrdR-boxes.</text>
</comment>
<comment type="cofactor">
    <cofactor evidence="1">
        <name>Zn(2+)</name>
        <dbReference type="ChEBI" id="CHEBI:29105"/>
    </cofactor>
    <text evidence="1">Binds 1 zinc ion.</text>
</comment>
<comment type="similarity">
    <text evidence="1">Belongs to the NrdR family.</text>
</comment>
<gene>
    <name evidence="1" type="primary">nrdR</name>
    <name type="ordered locus">Cgl1928</name>
    <name type="ordered locus">cg2112</name>
</gene>
<organism>
    <name type="scientific">Corynebacterium glutamicum (strain ATCC 13032 / DSM 20300 / JCM 1318 / BCRC 11384 / CCUG 27702 / LMG 3730 / NBRC 12168 / NCIMB 10025 / NRRL B-2784 / 534)</name>
    <dbReference type="NCBI Taxonomy" id="196627"/>
    <lineage>
        <taxon>Bacteria</taxon>
        <taxon>Bacillati</taxon>
        <taxon>Actinomycetota</taxon>
        <taxon>Actinomycetes</taxon>
        <taxon>Mycobacteriales</taxon>
        <taxon>Corynebacteriaceae</taxon>
        <taxon>Corynebacterium</taxon>
    </lineage>
</organism>
<sequence>MYCPFCQHDHSKVIDSRVIDAGSAIRRRRECSKCEGRFTTIEKAVLLVVKRNGVTEPFSREKVVTGVRRACQGRDVSDDALKRLAQQVEETVRSNGSSQVRANDIGLAILDPLRELDEVAYLRFASVYKSFDSADDFEKEIRLMRRRGRD</sequence>